<reference key="1">
    <citation type="submission" date="2007-07" db="EMBL/GenBank/DDBJ databases">
        <title>Complete sequence of chromosome of Shewanella baltica OS185.</title>
        <authorList>
            <consortium name="US DOE Joint Genome Institute"/>
            <person name="Copeland A."/>
            <person name="Lucas S."/>
            <person name="Lapidus A."/>
            <person name="Barry K."/>
            <person name="Glavina del Rio T."/>
            <person name="Dalin E."/>
            <person name="Tice H."/>
            <person name="Pitluck S."/>
            <person name="Sims D."/>
            <person name="Brettin T."/>
            <person name="Bruce D."/>
            <person name="Detter J.C."/>
            <person name="Han C."/>
            <person name="Schmutz J."/>
            <person name="Larimer F."/>
            <person name="Land M."/>
            <person name="Hauser L."/>
            <person name="Kyrpides N."/>
            <person name="Mikhailova N."/>
            <person name="Brettar I."/>
            <person name="Rodrigues J."/>
            <person name="Konstantinidis K."/>
            <person name="Tiedje J."/>
            <person name="Richardson P."/>
        </authorList>
    </citation>
    <scope>NUCLEOTIDE SEQUENCE [LARGE SCALE GENOMIC DNA]</scope>
    <source>
        <strain>OS185</strain>
    </source>
</reference>
<sequence>MKVSLPAFEKARVLVVGDVMLDRYWVGPTGRISPEAPVPVVKINQVEDRPGGAANVALNIATLGGQVQLAGLVGQDDTAHALTLGVQTLGVEPQWLTIADKPTITKLRVLSRNQQLIRLDFEEAFDKADSVRLLKQSEALLDSVDVVVLSDYAKGAIDQPRDFIALARAKGVMVLVDPKGSDFGRYQGASLITPNMSEFEAVVGTVTSEADLLEKARGLLKQHNFDAILVTRSEKGMTLVTANAPELHIPTVAREVYDVTGAGDTVISALATSLAAGADLPQACAIANTAAGVVVGKLGTSTVSRIELIEALALHHGESGFGVVSEDQLAYALEQAKLRGERVVMTNGCFDILHAGHVSYLKQAKALGDRLIVAVNDDASVKRLKGDGRPVNQVDRRMAVLAGLASVDWVVPFSEDTPQRIITRLLPNLLVKGGDYKLEDIAGGAEVIAAGGQVQVLGFEDGFSTTAIIQNIMANQ</sequence>
<proteinExistence type="inferred from homology"/>
<gene>
    <name evidence="1" type="primary">hldE</name>
    <name type="ordered locus">Shew185_0912</name>
</gene>
<keyword id="KW-0067">ATP-binding</keyword>
<keyword id="KW-0119">Carbohydrate metabolism</keyword>
<keyword id="KW-0418">Kinase</keyword>
<keyword id="KW-0511">Multifunctional enzyme</keyword>
<keyword id="KW-0547">Nucleotide-binding</keyword>
<keyword id="KW-0548">Nucleotidyltransferase</keyword>
<keyword id="KW-0808">Transferase</keyword>
<comment type="function">
    <text evidence="1">Catalyzes the phosphorylation of D-glycero-D-manno-heptose 7-phosphate at the C-1 position to selectively form D-glycero-beta-D-manno-heptose-1,7-bisphosphate.</text>
</comment>
<comment type="function">
    <text evidence="1">Catalyzes the ADP transfer from ATP to D-glycero-beta-D-manno-heptose 1-phosphate, yielding ADP-D-glycero-beta-D-manno-heptose.</text>
</comment>
<comment type="catalytic activity">
    <reaction evidence="1">
        <text>D-glycero-beta-D-manno-heptose 7-phosphate + ATP = D-glycero-beta-D-manno-heptose 1,7-bisphosphate + ADP + H(+)</text>
        <dbReference type="Rhea" id="RHEA:27473"/>
        <dbReference type="ChEBI" id="CHEBI:15378"/>
        <dbReference type="ChEBI" id="CHEBI:30616"/>
        <dbReference type="ChEBI" id="CHEBI:60204"/>
        <dbReference type="ChEBI" id="CHEBI:60208"/>
        <dbReference type="ChEBI" id="CHEBI:456216"/>
        <dbReference type="EC" id="2.7.1.167"/>
    </reaction>
</comment>
<comment type="catalytic activity">
    <reaction evidence="1">
        <text>D-glycero-beta-D-manno-heptose 1-phosphate + ATP + H(+) = ADP-D-glycero-beta-D-manno-heptose + diphosphate</text>
        <dbReference type="Rhea" id="RHEA:27465"/>
        <dbReference type="ChEBI" id="CHEBI:15378"/>
        <dbReference type="ChEBI" id="CHEBI:30616"/>
        <dbReference type="ChEBI" id="CHEBI:33019"/>
        <dbReference type="ChEBI" id="CHEBI:59967"/>
        <dbReference type="ChEBI" id="CHEBI:61593"/>
        <dbReference type="EC" id="2.7.7.70"/>
    </reaction>
</comment>
<comment type="pathway">
    <text evidence="1">Nucleotide-sugar biosynthesis; ADP-L-glycero-beta-D-manno-heptose biosynthesis; ADP-L-glycero-beta-D-manno-heptose from D-glycero-beta-D-manno-heptose 7-phosphate: step 1/4.</text>
</comment>
<comment type="pathway">
    <text evidence="1">Nucleotide-sugar biosynthesis; ADP-L-glycero-beta-D-manno-heptose biosynthesis; ADP-L-glycero-beta-D-manno-heptose from D-glycero-beta-D-manno-heptose 7-phosphate: step 3/4.</text>
</comment>
<comment type="subunit">
    <text evidence="1">Homodimer.</text>
</comment>
<comment type="similarity">
    <text evidence="1">In the N-terminal section; belongs to the carbohydrate kinase PfkB family.</text>
</comment>
<comment type="similarity">
    <text evidence="1">In the C-terminal section; belongs to the cytidylyltransferase family.</text>
</comment>
<protein>
    <recommendedName>
        <fullName evidence="1">Bifunctional protein HldE</fullName>
    </recommendedName>
    <domain>
        <recommendedName>
            <fullName evidence="1">D-beta-D-heptose 7-phosphate kinase</fullName>
            <ecNumber evidence="1">2.7.1.167</ecNumber>
        </recommendedName>
        <alternativeName>
            <fullName evidence="1">D-beta-D-heptose 7-phosphotransferase</fullName>
        </alternativeName>
        <alternativeName>
            <fullName evidence="1">D-glycero-beta-D-manno-heptose-7-phosphate kinase</fullName>
        </alternativeName>
    </domain>
    <domain>
        <recommendedName>
            <fullName evidence="1">D-beta-D-heptose 1-phosphate adenylyltransferase</fullName>
            <ecNumber evidence="1">2.7.7.70</ecNumber>
        </recommendedName>
        <alternativeName>
            <fullName evidence="1">D-glycero-beta-D-manno-heptose 1-phosphate adenylyltransferase</fullName>
        </alternativeName>
    </domain>
</protein>
<dbReference type="EC" id="2.7.1.167" evidence="1"/>
<dbReference type="EC" id="2.7.7.70" evidence="1"/>
<dbReference type="EMBL" id="CP000753">
    <property type="protein sequence ID" value="ABS07066.1"/>
    <property type="molecule type" value="Genomic_DNA"/>
</dbReference>
<dbReference type="RefSeq" id="WP_012088379.1">
    <property type="nucleotide sequence ID" value="NC_009665.1"/>
</dbReference>
<dbReference type="SMR" id="A6WJS7"/>
<dbReference type="KEGG" id="sbm:Shew185_0912"/>
<dbReference type="HOGENOM" id="CLU_021150_2_1_6"/>
<dbReference type="UniPathway" id="UPA00356">
    <property type="reaction ID" value="UER00437"/>
</dbReference>
<dbReference type="UniPathway" id="UPA00356">
    <property type="reaction ID" value="UER00439"/>
</dbReference>
<dbReference type="GO" id="GO:0005829">
    <property type="term" value="C:cytosol"/>
    <property type="evidence" value="ECO:0007669"/>
    <property type="project" value="TreeGrafter"/>
</dbReference>
<dbReference type="GO" id="GO:0005524">
    <property type="term" value="F:ATP binding"/>
    <property type="evidence" value="ECO:0007669"/>
    <property type="project" value="UniProtKB-UniRule"/>
</dbReference>
<dbReference type="GO" id="GO:0033785">
    <property type="term" value="F:heptose 7-phosphate kinase activity"/>
    <property type="evidence" value="ECO:0007669"/>
    <property type="project" value="UniProtKB-UniRule"/>
</dbReference>
<dbReference type="GO" id="GO:0033786">
    <property type="term" value="F:heptose-1-phosphate adenylyltransferase activity"/>
    <property type="evidence" value="ECO:0007669"/>
    <property type="project" value="UniProtKB-UniRule"/>
</dbReference>
<dbReference type="GO" id="GO:0016773">
    <property type="term" value="F:phosphotransferase activity, alcohol group as acceptor"/>
    <property type="evidence" value="ECO:0007669"/>
    <property type="project" value="InterPro"/>
</dbReference>
<dbReference type="GO" id="GO:0097171">
    <property type="term" value="P:ADP-L-glycero-beta-D-manno-heptose biosynthetic process"/>
    <property type="evidence" value="ECO:0007669"/>
    <property type="project" value="UniProtKB-UniPathway"/>
</dbReference>
<dbReference type="CDD" id="cd01172">
    <property type="entry name" value="RfaE_like"/>
    <property type="match status" value="1"/>
</dbReference>
<dbReference type="FunFam" id="3.40.1190.20:FF:000002">
    <property type="entry name" value="Bifunctional protein HldE"/>
    <property type="match status" value="1"/>
</dbReference>
<dbReference type="FunFam" id="3.40.50.620:FF:000028">
    <property type="entry name" value="Bifunctional protein HldE"/>
    <property type="match status" value="1"/>
</dbReference>
<dbReference type="Gene3D" id="3.40.1190.20">
    <property type="match status" value="1"/>
</dbReference>
<dbReference type="Gene3D" id="3.40.50.620">
    <property type="entry name" value="HUPs"/>
    <property type="match status" value="1"/>
</dbReference>
<dbReference type="HAMAP" id="MF_01603">
    <property type="entry name" value="HldE"/>
    <property type="match status" value="1"/>
</dbReference>
<dbReference type="InterPro" id="IPR023030">
    <property type="entry name" value="Bifunc_HldE"/>
</dbReference>
<dbReference type="InterPro" id="IPR002173">
    <property type="entry name" value="Carboh/pur_kinase_PfkB_CS"/>
</dbReference>
<dbReference type="InterPro" id="IPR004821">
    <property type="entry name" value="Cyt_trans-like"/>
</dbReference>
<dbReference type="InterPro" id="IPR011611">
    <property type="entry name" value="PfkB_dom"/>
</dbReference>
<dbReference type="InterPro" id="IPR011913">
    <property type="entry name" value="RfaE_dom_I"/>
</dbReference>
<dbReference type="InterPro" id="IPR011914">
    <property type="entry name" value="RfaE_dom_II"/>
</dbReference>
<dbReference type="InterPro" id="IPR029056">
    <property type="entry name" value="Ribokinase-like"/>
</dbReference>
<dbReference type="InterPro" id="IPR014729">
    <property type="entry name" value="Rossmann-like_a/b/a_fold"/>
</dbReference>
<dbReference type="NCBIfam" id="TIGR00125">
    <property type="entry name" value="cyt_tran_rel"/>
    <property type="match status" value="1"/>
</dbReference>
<dbReference type="NCBIfam" id="NF008454">
    <property type="entry name" value="PRK11316.1"/>
    <property type="match status" value="1"/>
</dbReference>
<dbReference type="NCBIfam" id="TIGR02198">
    <property type="entry name" value="rfaE_dom_I"/>
    <property type="match status" value="1"/>
</dbReference>
<dbReference type="NCBIfam" id="TIGR02199">
    <property type="entry name" value="rfaE_dom_II"/>
    <property type="match status" value="1"/>
</dbReference>
<dbReference type="PANTHER" id="PTHR46969">
    <property type="entry name" value="BIFUNCTIONAL PROTEIN HLDE"/>
    <property type="match status" value="1"/>
</dbReference>
<dbReference type="PANTHER" id="PTHR46969:SF1">
    <property type="entry name" value="BIFUNCTIONAL PROTEIN HLDE"/>
    <property type="match status" value="1"/>
</dbReference>
<dbReference type="Pfam" id="PF01467">
    <property type="entry name" value="CTP_transf_like"/>
    <property type="match status" value="1"/>
</dbReference>
<dbReference type="Pfam" id="PF00294">
    <property type="entry name" value="PfkB"/>
    <property type="match status" value="1"/>
</dbReference>
<dbReference type="SUPFAM" id="SSF52374">
    <property type="entry name" value="Nucleotidylyl transferase"/>
    <property type="match status" value="1"/>
</dbReference>
<dbReference type="SUPFAM" id="SSF53613">
    <property type="entry name" value="Ribokinase-like"/>
    <property type="match status" value="1"/>
</dbReference>
<dbReference type="PROSITE" id="PS00583">
    <property type="entry name" value="PFKB_KINASES_1"/>
    <property type="match status" value="1"/>
</dbReference>
<dbReference type="PROSITE" id="PS00584">
    <property type="entry name" value="PFKB_KINASES_2"/>
    <property type="match status" value="1"/>
</dbReference>
<evidence type="ECO:0000255" key="1">
    <source>
        <dbReference type="HAMAP-Rule" id="MF_01603"/>
    </source>
</evidence>
<accession>A6WJS7</accession>
<feature type="chain" id="PRO_1000069404" description="Bifunctional protein HldE">
    <location>
        <begin position="1"/>
        <end position="476"/>
    </location>
</feature>
<feature type="region of interest" description="Ribokinase">
    <location>
        <begin position="1"/>
        <end position="319"/>
    </location>
</feature>
<feature type="region of interest" description="Cytidylyltransferase">
    <location>
        <begin position="345"/>
        <end position="476"/>
    </location>
</feature>
<feature type="active site" evidence="1">
    <location>
        <position position="264"/>
    </location>
</feature>
<feature type="binding site" evidence="1">
    <location>
        <begin position="195"/>
        <end position="198"/>
    </location>
    <ligand>
        <name>ATP</name>
        <dbReference type="ChEBI" id="CHEBI:30616"/>
    </ligand>
</feature>
<name>HLDE_SHEB8</name>
<organism>
    <name type="scientific">Shewanella baltica (strain OS185)</name>
    <dbReference type="NCBI Taxonomy" id="402882"/>
    <lineage>
        <taxon>Bacteria</taxon>
        <taxon>Pseudomonadati</taxon>
        <taxon>Pseudomonadota</taxon>
        <taxon>Gammaproteobacteria</taxon>
        <taxon>Alteromonadales</taxon>
        <taxon>Shewanellaceae</taxon>
        <taxon>Shewanella</taxon>
    </lineage>
</organism>